<dbReference type="EC" id="4.2.3.131" evidence="3"/>
<dbReference type="EMBL" id="EF635966">
    <property type="protein sequence ID" value="ABV08817.1"/>
    <property type="molecule type" value="mRNA"/>
</dbReference>
<dbReference type="UniPathway" id="UPA00213"/>
<dbReference type="GO" id="GO:0009507">
    <property type="term" value="C:chloroplast"/>
    <property type="evidence" value="ECO:0007669"/>
    <property type="project" value="UniProtKB-SubCell"/>
</dbReference>
<dbReference type="GO" id="GO:0000287">
    <property type="term" value="F:magnesium ion binding"/>
    <property type="evidence" value="ECO:0007669"/>
    <property type="project" value="InterPro"/>
</dbReference>
<dbReference type="GO" id="GO:0062205">
    <property type="term" value="F:miltiradiene synthase activity"/>
    <property type="evidence" value="ECO:0007669"/>
    <property type="project" value="UniProtKB-EC"/>
</dbReference>
<dbReference type="GO" id="GO:0010333">
    <property type="term" value="F:terpene synthase activity"/>
    <property type="evidence" value="ECO:0007669"/>
    <property type="project" value="InterPro"/>
</dbReference>
<dbReference type="GO" id="GO:0009686">
    <property type="term" value="P:gibberellin biosynthetic process"/>
    <property type="evidence" value="ECO:0007669"/>
    <property type="project" value="TreeGrafter"/>
</dbReference>
<dbReference type="FunFam" id="1.10.600.10:FF:000005">
    <property type="entry name" value="Ent-kaur-16-ene synthase, chloroplastic"/>
    <property type="match status" value="1"/>
</dbReference>
<dbReference type="Gene3D" id="1.10.600.10">
    <property type="entry name" value="Farnesyl Diphosphate Synthase"/>
    <property type="match status" value="1"/>
</dbReference>
<dbReference type="Gene3D" id="1.50.10.130">
    <property type="entry name" value="Terpene synthase, N-terminal domain"/>
    <property type="match status" value="1"/>
</dbReference>
<dbReference type="InterPro" id="IPR008949">
    <property type="entry name" value="Isoprenoid_synthase_dom_sf"/>
</dbReference>
<dbReference type="InterPro" id="IPR001906">
    <property type="entry name" value="Terpene_synth_N"/>
</dbReference>
<dbReference type="InterPro" id="IPR036965">
    <property type="entry name" value="Terpene_synth_N_sf"/>
</dbReference>
<dbReference type="InterPro" id="IPR050148">
    <property type="entry name" value="Terpene_synthase-like"/>
</dbReference>
<dbReference type="InterPro" id="IPR005630">
    <property type="entry name" value="Terpene_synthase_metal-bd"/>
</dbReference>
<dbReference type="InterPro" id="IPR008930">
    <property type="entry name" value="Terpenoid_cyclase/PrenylTrfase"/>
</dbReference>
<dbReference type="PANTHER" id="PTHR31739:SF33">
    <property type="entry name" value="CIS-ABIENOL SYNTHASE, CHLOROPLASTIC"/>
    <property type="match status" value="1"/>
</dbReference>
<dbReference type="PANTHER" id="PTHR31739">
    <property type="entry name" value="ENT-COPALYL DIPHOSPHATE SYNTHASE, CHLOROPLASTIC"/>
    <property type="match status" value="1"/>
</dbReference>
<dbReference type="Pfam" id="PF01397">
    <property type="entry name" value="Terpene_synth"/>
    <property type="match status" value="1"/>
</dbReference>
<dbReference type="Pfam" id="PF03936">
    <property type="entry name" value="Terpene_synth_C"/>
    <property type="match status" value="1"/>
</dbReference>
<dbReference type="SUPFAM" id="SSF48239">
    <property type="entry name" value="Terpenoid cyclases/Protein prenyltransferases"/>
    <property type="match status" value="1"/>
</dbReference>
<dbReference type="SUPFAM" id="SSF48576">
    <property type="entry name" value="Terpenoid synthases"/>
    <property type="match status" value="1"/>
</dbReference>
<gene>
    <name evidence="7" type="primary">KSL1</name>
</gene>
<organism>
    <name type="scientific">Salvia miltiorrhiza</name>
    <name type="common">Chinese sage</name>
    <dbReference type="NCBI Taxonomy" id="226208"/>
    <lineage>
        <taxon>Eukaryota</taxon>
        <taxon>Viridiplantae</taxon>
        <taxon>Streptophyta</taxon>
        <taxon>Embryophyta</taxon>
        <taxon>Tracheophyta</taxon>
        <taxon>Spermatophyta</taxon>
        <taxon>Magnoliopsida</taxon>
        <taxon>eudicotyledons</taxon>
        <taxon>Gunneridae</taxon>
        <taxon>Pentapetalae</taxon>
        <taxon>asterids</taxon>
        <taxon>lamiids</taxon>
        <taxon>Lamiales</taxon>
        <taxon>Lamiaceae</taxon>
        <taxon>Nepetoideae</taxon>
        <taxon>Mentheae</taxon>
        <taxon>Salviinae</taxon>
        <taxon>Salvia</taxon>
        <taxon>Salvia incertae sedis</taxon>
    </lineage>
</organism>
<reference key="1">
    <citation type="journal article" date="2009" name="Org. Lett.">
        <title>A functional genomics approach to tanshinone biosynthesis provides stereochemical insights.</title>
        <authorList>
            <person name="Gao W."/>
            <person name="Hillwig M.L."/>
            <person name="Huang L."/>
            <person name="Cui G."/>
            <person name="Wang X."/>
            <person name="Kong J."/>
            <person name="Yang B."/>
            <person name="Peters R.J."/>
        </authorList>
    </citation>
    <scope>NUCLEOTIDE SEQUENCE [MRNA]</scope>
    <scope>FUNCTION</scope>
    <scope>CATALYTIC ACTIVITY</scope>
    <scope>INDUCTION BY JASMONATE</scope>
    <source>
        <tissue>Root hair</tissue>
    </source>
</reference>
<reference key="2">
    <citation type="journal article" date="2011" name="Mol. Biol. Rep.">
        <title>Candidate genes involved in tanshinone biosynthesis in hairy roots of Salvia miltiorrhiza revealed by cDNA microarray.</title>
        <authorList>
            <person name="Cui G."/>
            <person name="Huang L."/>
            <person name="Tang X."/>
            <person name="Zhao J."/>
        </authorList>
    </citation>
    <scope>FUNCTION</scope>
</reference>
<reference key="3">
    <citation type="journal article" date="2012" name="J. Exp. Bot.">
        <title>Genome-wide identification and characterization of novel genes involved in terpenoid biosynthesis in Salvia miltiorrhiza.</title>
        <authorList>
            <person name="Ma Y."/>
            <person name="Yuan L."/>
            <person name="Wu B."/>
            <person name="Li X."/>
            <person name="Chen S."/>
            <person name="Lu S."/>
        </authorList>
    </citation>
    <scope>INDUCTION BY JASMONATE</scope>
</reference>
<sequence length="595" mass="68370">MSLAFNPAATAFSGNGARSRRENFPVKHVTVRGFPMITNKSSFAVKCNLTTTDLMGKIAEKFKGEDSNFPAAAAVQPAADMPSNLCIIDTLQRLGVDRYFRSEIDTILEDTYRLWQRKERAIFSDTAIHAMAFRLLRVKGYEVSSEELAPYADQEHVDLQTIEVATVIELYRAAQERTGEDESSLKKLHAWTTTFLKQKLLTNSIPDKKLHKLVEYYLKNXHGILDRMGVRQNLDLYDISYYRTSKAANRFSNLCSEDFLAFARQDFNICQAQHQKELQQLQRWYADCKLDTLKYGRDVVRVANFLTSAIIGDPELSDVRIVFAQHIVLVTRIDDFFDHRGSREESYKILELIKEWKEKPAAEYGSEEVEILFTAVYNTVNELAERAHVEQGRSVKDFLIKLWVQILSIFKRELDTWSDDTALTLDDYLSASWVSIGCRICILMSMQFIGIKLSDEMLLSEECIDLCRHVSMVDRLLNDVQTFEKERKENTGNSVTLLLAANKDDSSFTEEEAIRIAKEMAECNRRQLMQIVYKTGTIFPRQCKDMFLKVCRIGCYLYASGDEFTSPQQMMEDMKSLVYEPLTIHPLVANNVRGK</sequence>
<proteinExistence type="evidence at protein level"/>
<feature type="transit peptide" description="Chloroplast" evidence="2">
    <location>
        <begin position="1"/>
        <end position="47"/>
    </location>
</feature>
<feature type="chain" id="PRO_0000449931" description="Miltiradiene synthase KSL1, chloroplastic">
    <location>
        <begin position="48"/>
        <end position="595"/>
    </location>
</feature>
<feature type="short sequence motif" description="DDXXD motif" evidence="8">
    <location>
        <begin position="334"/>
        <end position="338"/>
    </location>
</feature>
<feature type="binding site" evidence="1">
    <location>
        <position position="334"/>
    </location>
    <ligand>
        <name>Mg(2+)</name>
        <dbReference type="ChEBI" id="CHEBI:18420"/>
        <label>1</label>
    </ligand>
</feature>
<feature type="binding site" evidence="1">
    <location>
        <position position="334"/>
    </location>
    <ligand>
        <name>Mg(2+)</name>
        <dbReference type="ChEBI" id="CHEBI:18420"/>
        <label>2</label>
    </ligand>
</feature>
<feature type="binding site" evidence="1">
    <location>
        <position position="338"/>
    </location>
    <ligand>
        <name>Mg(2+)</name>
        <dbReference type="ChEBI" id="CHEBI:18420"/>
        <label>1</label>
    </ligand>
</feature>
<feature type="binding site" evidence="1">
    <location>
        <position position="338"/>
    </location>
    <ligand>
        <name>Mg(2+)</name>
        <dbReference type="ChEBI" id="CHEBI:18420"/>
        <label>2</label>
    </ligand>
</feature>
<feature type="binding site" evidence="1">
    <location>
        <position position="478"/>
    </location>
    <ligand>
        <name>Mg(2+)</name>
        <dbReference type="ChEBI" id="CHEBI:18420"/>
        <label>3</label>
    </ligand>
</feature>
<feature type="binding site" evidence="1">
    <location>
        <position position="486"/>
    </location>
    <ligand>
        <name>Mg(2+)</name>
        <dbReference type="ChEBI" id="CHEBI:18420"/>
        <label>3</label>
    </ligand>
</feature>
<keyword id="KW-0150">Chloroplast</keyword>
<keyword id="KW-0456">Lyase</keyword>
<keyword id="KW-0460">Magnesium</keyword>
<keyword id="KW-0479">Metal-binding</keyword>
<keyword id="KW-0934">Plastid</keyword>
<keyword id="KW-0809">Transit peptide</keyword>
<accession>C8XPS0</accession>
<name>KSL1_SALMI</name>
<evidence type="ECO:0000250" key="1">
    <source>
        <dbReference type="UniProtKB" id="Q40577"/>
    </source>
</evidence>
<evidence type="ECO:0000255" key="2"/>
<evidence type="ECO:0000269" key="3">
    <source>
    </source>
</evidence>
<evidence type="ECO:0000269" key="4">
    <source>
    </source>
</evidence>
<evidence type="ECO:0000269" key="5">
    <source>
    </source>
</evidence>
<evidence type="ECO:0000303" key="6">
    <source>
    </source>
</evidence>
<evidence type="ECO:0000303" key="7">
    <source>
    </source>
</evidence>
<evidence type="ECO:0000305" key="8"/>
<comment type="function">
    <text evidence="3 4">Involved in tanshinone biosynthesis in hairy roots (PubMed:19905026, PubMed:21082262). Catalyzes the conversion of copalyl diphosphate (CPP) to miltiradiene (PubMed:19905026, PubMed:21082262).</text>
</comment>
<comment type="catalytic activity">
    <reaction evidence="3">
        <text>(+)-copalyl diphosphate = miltiradiene + diphosphate</text>
        <dbReference type="Rhea" id="RHEA:33983"/>
        <dbReference type="ChEBI" id="CHEBI:33019"/>
        <dbReference type="ChEBI" id="CHEBI:58635"/>
        <dbReference type="ChEBI" id="CHEBI:65037"/>
        <dbReference type="EC" id="4.2.3.131"/>
    </reaction>
    <physiologicalReaction direction="left-to-right" evidence="3">
        <dbReference type="Rhea" id="RHEA:33984"/>
    </physiologicalReaction>
</comment>
<comment type="cofactor">
    <cofactor evidence="1">
        <name>Mg(2+)</name>
        <dbReference type="ChEBI" id="CHEBI:18420"/>
    </cofactor>
    <text evidence="1">Binds 3 Mg(2+) ions per subunit.</text>
</comment>
<comment type="pathway">
    <text evidence="8">Secondary metabolite biosynthesis; terpenoid biosynthesis.</text>
</comment>
<comment type="subcellular location">
    <subcellularLocation>
        <location evidence="2">Plastid</location>
        <location evidence="2">Chloroplast</location>
    </subcellularLocation>
</comment>
<comment type="induction">
    <text evidence="3 5">Induced by jasmonate (MeJA) in roots.</text>
</comment>
<comment type="domain">
    <text evidence="8">The Asp-Asp-Xaa-Xaa-Asp/Glu (DDXXD/E) motif is important for the catalytic activity, presumably through binding to Mg(2+).</text>
</comment>
<comment type="similarity">
    <text evidence="8">Belongs to the terpene synthase family.</text>
</comment>
<protein>
    <recommendedName>
        <fullName evidence="8">Miltiradiene synthase KSL1, chloroplastic</fullName>
        <ecNumber evidence="3">4.2.3.131</ecNumber>
    </recommendedName>
    <alternativeName>
        <fullName evidence="7">Kaurene synthase-like 1</fullName>
        <shortName evidence="6">SmKSL</shortName>
        <shortName evidence="7">SmKSL1</shortName>
    </alternativeName>
</protein>